<reference key="1">
    <citation type="journal article" date="2005" name="Proc. Natl. Acad. Sci. U.S.A.">
        <title>The psychrophilic lifestyle as revealed by the genome sequence of Colwellia psychrerythraea 34H through genomic and proteomic analyses.</title>
        <authorList>
            <person name="Methe B.A."/>
            <person name="Nelson K.E."/>
            <person name="Deming J.W."/>
            <person name="Momen B."/>
            <person name="Melamud E."/>
            <person name="Zhang X."/>
            <person name="Moult J."/>
            <person name="Madupu R."/>
            <person name="Nelson W.C."/>
            <person name="Dodson R.J."/>
            <person name="Brinkac L.M."/>
            <person name="Daugherty S.C."/>
            <person name="Durkin A.S."/>
            <person name="DeBoy R.T."/>
            <person name="Kolonay J.F."/>
            <person name="Sullivan S.A."/>
            <person name="Zhou L."/>
            <person name="Davidsen T.M."/>
            <person name="Wu M."/>
            <person name="Huston A.L."/>
            <person name="Lewis M."/>
            <person name="Weaver B."/>
            <person name="Weidman J.F."/>
            <person name="Khouri H."/>
            <person name="Utterback T.R."/>
            <person name="Feldblyum T.V."/>
            <person name="Fraser C.M."/>
        </authorList>
    </citation>
    <scope>NUCLEOTIDE SEQUENCE [LARGE SCALE GENOMIC DNA]</scope>
    <source>
        <strain>34H / ATCC BAA-681</strain>
    </source>
</reference>
<gene>
    <name type="ordered locus">CPS_1251</name>
</gene>
<evidence type="ECO:0000255" key="1">
    <source>
        <dbReference type="HAMAP-Rule" id="MF_00651"/>
    </source>
</evidence>
<sequence length="148" mass="16547">MSTKTKSPIGQRTVIGFDFGKKYIGVAVGQEMTGSATPLGSVKATDGIPHWDNLAKYLKEWQPDFIVVGLPLNMDGSEQQLTLDAKKFGNRIHGRFGIQVEFQDERLTTADAKEQLFARGGFKNLKKDNIDAESARLIIESYFEQQYT</sequence>
<keyword id="KW-0963">Cytoplasm</keyword>
<keyword id="KW-0378">Hydrolase</keyword>
<keyword id="KW-0540">Nuclease</keyword>
<keyword id="KW-0690">Ribosome biogenesis</keyword>
<feature type="chain" id="PRO_0000257523" description="Putative pre-16S rRNA nuclease">
    <location>
        <begin position="1"/>
        <end position="148"/>
    </location>
</feature>
<comment type="function">
    <text evidence="1">Could be a nuclease involved in processing of the 5'-end of pre-16S rRNA.</text>
</comment>
<comment type="subcellular location">
    <subcellularLocation>
        <location evidence="1">Cytoplasm</location>
    </subcellularLocation>
</comment>
<comment type="similarity">
    <text evidence="1">Belongs to the YqgF nuclease family.</text>
</comment>
<accession>Q486M1</accession>
<name>YQGF_COLP3</name>
<organism>
    <name type="scientific">Colwellia psychrerythraea (strain 34H / ATCC BAA-681)</name>
    <name type="common">Vibrio psychroerythus</name>
    <dbReference type="NCBI Taxonomy" id="167879"/>
    <lineage>
        <taxon>Bacteria</taxon>
        <taxon>Pseudomonadati</taxon>
        <taxon>Pseudomonadota</taxon>
        <taxon>Gammaproteobacteria</taxon>
        <taxon>Alteromonadales</taxon>
        <taxon>Colwelliaceae</taxon>
        <taxon>Colwellia</taxon>
    </lineage>
</organism>
<proteinExistence type="inferred from homology"/>
<protein>
    <recommendedName>
        <fullName evidence="1">Putative pre-16S rRNA nuclease</fullName>
        <ecNumber evidence="1">3.1.-.-</ecNumber>
    </recommendedName>
</protein>
<dbReference type="EC" id="3.1.-.-" evidence="1"/>
<dbReference type="EMBL" id="CP000083">
    <property type="protein sequence ID" value="AAZ25247.1"/>
    <property type="molecule type" value="Genomic_DNA"/>
</dbReference>
<dbReference type="SMR" id="Q486M1"/>
<dbReference type="STRING" id="167879.CPS_1251"/>
<dbReference type="KEGG" id="cps:CPS_1251"/>
<dbReference type="eggNOG" id="COG0816">
    <property type="taxonomic scope" value="Bacteria"/>
</dbReference>
<dbReference type="HOGENOM" id="CLU_098240_3_0_6"/>
<dbReference type="Proteomes" id="UP000000547">
    <property type="component" value="Chromosome"/>
</dbReference>
<dbReference type="GO" id="GO:0005829">
    <property type="term" value="C:cytosol"/>
    <property type="evidence" value="ECO:0007669"/>
    <property type="project" value="TreeGrafter"/>
</dbReference>
<dbReference type="GO" id="GO:0004518">
    <property type="term" value="F:nuclease activity"/>
    <property type="evidence" value="ECO:0007669"/>
    <property type="project" value="UniProtKB-KW"/>
</dbReference>
<dbReference type="GO" id="GO:0000967">
    <property type="term" value="P:rRNA 5'-end processing"/>
    <property type="evidence" value="ECO:0007669"/>
    <property type="project" value="UniProtKB-UniRule"/>
</dbReference>
<dbReference type="CDD" id="cd16964">
    <property type="entry name" value="YqgF"/>
    <property type="match status" value="1"/>
</dbReference>
<dbReference type="FunFam" id="3.30.420.140:FF:000002">
    <property type="entry name" value="Putative pre-16S rRNA nuclease"/>
    <property type="match status" value="1"/>
</dbReference>
<dbReference type="Gene3D" id="3.30.420.140">
    <property type="entry name" value="YqgF/RNase H-like domain"/>
    <property type="match status" value="1"/>
</dbReference>
<dbReference type="HAMAP" id="MF_00651">
    <property type="entry name" value="Nuclease_YqgF"/>
    <property type="match status" value="1"/>
</dbReference>
<dbReference type="InterPro" id="IPR012337">
    <property type="entry name" value="RNaseH-like_sf"/>
</dbReference>
<dbReference type="InterPro" id="IPR005227">
    <property type="entry name" value="YqgF"/>
</dbReference>
<dbReference type="InterPro" id="IPR006641">
    <property type="entry name" value="YqgF/RNaseH-like_dom"/>
</dbReference>
<dbReference type="InterPro" id="IPR037027">
    <property type="entry name" value="YqgF/RNaseH-like_dom_sf"/>
</dbReference>
<dbReference type="NCBIfam" id="TIGR00250">
    <property type="entry name" value="RNAse_H_YqgF"/>
    <property type="match status" value="1"/>
</dbReference>
<dbReference type="PANTHER" id="PTHR33317">
    <property type="entry name" value="POLYNUCLEOTIDYL TRANSFERASE, RIBONUCLEASE H-LIKE SUPERFAMILY PROTEIN"/>
    <property type="match status" value="1"/>
</dbReference>
<dbReference type="PANTHER" id="PTHR33317:SF4">
    <property type="entry name" value="POLYNUCLEOTIDYL TRANSFERASE, RIBONUCLEASE H-LIKE SUPERFAMILY PROTEIN"/>
    <property type="match status" value="1"/>
</dbReference>
<dbReference type="Pfam" id="PF03652">
    <property type="entry name" value="RuvX"/>
    <property type="match status" value="1"/>
</dbReference>
<dbReference type="SMART" id="SM00732">
    <property type="entry name" value="YqgFc"/>
    <property type="match status" value="1"/>
</dbReference>
<dbReference type="SUPFAM" id="SSF53098">
    <property type="entry name" value="Ribonuclease H-like"/>
    <property type="match status" value="1"/>
</dbReference>